<sequence length="359" mass="38972">MGTIQVDLGNRSYPIYIASAILDKIGTYLSEQPLGKKVLLVTDQQVAPLYAPRVIESLKNAGFKVAVAEIPAGEPSKTLEQASRLYDLAFDHALDRQSSVIALGGGVVGDLAGFVAATYMRGVPFIQIPTTLLAQVDSSVGGKVAVNHSRGKNMIGAFYQPQMVMIDVATLQTLPERELKAGLAEVIKYGVIWDGSFFTWLEKNYSRILNLDTTALEQVAETCCKIKASVVEQDEREQGCRAILNYGHTVGHAIESLSGYGTYLHGEAVAMGMISAARLALNEGILSQQDFERIYRLISAVGLPTELPRGLGPQDIIDSMYHDKKTVLGKLVFVLPRSLGQVDIFKDVKEADILAVLSQ</sequence>
<gene>
    <name evidence="1" type="primary">aroB</name>
    <name type="ordered locus">Dred_1021</name>
</gene>
<evidence type="ECO:0000255" key="1">
    <source>
        <dbReference type="HAMAP-Rule" id="MF_00110"/>
    </source>
</evidence>
<reference key="1">
    <citation type="submission" date="2007-03" db="EMBL/GenBank/DDBJ databases">
        <title>Complete sequence of Desulfotomaculum reducens MI-1.</title>
        <authorList>
            <consortium name="US DOE Joint Genome Institute"/>
            <person name="Copeland A."/>
            <person name="Lucas S."/>
            <person name="Lapidus A."/>
            <person name="Barry K."/>
            <person name="Detter J.C."/>
            <person name="Glavina del Rio T."/>
            <person name="Hammon N."/>
            <person name="Israni S."/>
            <person name="Dalin E."/>
            <person name="Tice H."/>
            <person name="Pitluck S."/>
            <person name="Sims D."/>
            <person name="Brettin T."/>
            <person name="Bruce D."/>
            <person name="Han C."/>
            <person name="Tapia R."/>
            <person name="Schmutz J."/>
            <person name="Larimer F."/>
            <person name="Land M."/>
            <person name="Hauser L."/>
            <person name="Kyrpides N."/>
            <person name="Kim E."/>
            <person name="Tebo B.M."/>
            <person name="Richardson P."/>
        </authorList>
    </citation>
    <scope>NUCLEOTIDE SEQUENCE [LARGE SCALE GENOMIC DNA]</scope>
    <source>
        <strain>ATCC BAA-1160 / DSM 100696 / MI-1</strain>
    </source>
</reference>
<comment type="function">
    <text evidence="1">Catalyzes the conversion of 3-deoxy-D-arabino-heptulosonate 7-phosphate (DAHP) to dehydroquinate (DHQ).</text>
</comment>
<comment type="catalytic activity">
    <reaction evidence="1">
        <text>7-phospho-2-dehydro-3-deoxy-D-arabino-heptonate = 3-dehydroquinate + phosphate</text>
        <dbReference type="Rhea" id="RHEA:21968"/>
        <dbReference type="ChEBI" id="CHEBI:32364"/>
        <dbReference type="ChEBI" id="CHEBI:43474"/>
        <dbReference type="ChEBI" id="CHEBI:58394"/>
        <dbReference type="EC" id="4.2.3.4"/>
    </reaction>
</comment>
<comment type="cofactor">
    <cofactor evidence="1">
        <name>Co(2+)</name>
        <dbReference type="ChEBI" id="CHEBI:48828"/>
    </cofactor>
    <cofactor evidence="1">
        <name>Zn(2+)</name>
        <dbReference type="ChEBI" id="CHEBI:29105"/>
    </cofactor>
    <text evidence="1">Binds 1 divalent metal cation per subunit. Can use either Co(2+) or Zn(2+).</text>
</comment>
<comment type="cofactor">
    <cofactor evidence="1">
        <name>NAD(+)</name>
        <dbReference type="ChEBI" id="CHEBI:57540"/>
    </cofactor>
</comment>
<comment type="pathway">
    <text evidence="1">Metabolic intermediate biosynthesis; chorismate biosynthesis; chorismate from D-erythrose 4-phosphate and phosphoenolpyruvate: step 2/7.</text>
</comment>
<comment type="subcellular location">
    <subcellularLocation>
        <location evidence="1">Cytoplasm</location>
    </subcellularLocation>
</comment>
<comment type="similarity">
    <text evidence="1">Belongs to the sugar phosphate cyclases superfamily. Dehydroquinate synthase family.</text>
</comment>
<organism>
    <name type="scientific">Desulforamulus reducens (strain ATCC BAA-1160 / DSM 100696 / MI-1)</name>
    <name type="common">Desulfotomaculum reducens</name>
    <dbReference type="NCBI Taxonomy" id="349161"/>
    <lineage>
        <taxon>Bacteria</taxon>
        <taxon>Bacillati</taxon>
        <taxon>Bacillota</taxon>
        <taxon>Clostridia</taxon>
        <taxon>Eubacteriales</taxon>
        <taxon>Peptococcaceae</taxon>
        <taxon>Desulforamulus</taxon>
    </lineage>
</organism>
<keyword id="KW-0028">Amino-acid biosynthesis</keyword>
<keyword id="KW-0057">Aromatic amino acid biosynthesis</keyword>
<keyword id="KW-0170">Cobalt</keyword>
<keyword id="KW-0963">Cytoplasm</keyword>
<keyword id="KW-0456">Lyase</keyword>
<keyword id="KW-0479">Metal-binding</keyword>
<keyword id="KW-0520">NAD</keyword>
<keyword id="KW-0547">Nucleotide-binding</keyword>
<keyword id="KW-1185">Reference proteome</keyword>
<keyword id="KW-0862">Zinc</keyword>
<protein>
    <recommendedName>
        <fullName evidence="1">3-dehydroquinate synthase</fullName>
        <shortName evidence="1">DHQS</shortName>
        <ecNumber evidence="1">4.2.3.4</ecNumber>
    </recommendedName>
</protein>
<feature type="chain" id="PRO_1000202906" description="3-dehydroquinate synthase">
    <location>
        <begin position="1"/>
        <end position="359"/>
    </location>
</feature>
<feature type="binding site" evidence="1">
    <location>
        <begin position="106"/>
        <end position="110"/>
    </location>
    <ligand>
        <name>NAD(+)</name>
        <dbReference type="ChEBI" id="CHEBI:57540"/>
    </ligand>
</feature>
<feature type="binding site" evidence="1">
    <location>
        <begin position="130"/>
        <end position="131"/>
    </location>
    <ligand>
        <name>NAD(+)</name>
        <dbReference type="ChEBI" id="CHEBI:57540"/>
    </ligand>
</feature>
<feature type="binding site" evidence="1">
    <location>
        <position position="143"/>
    </location>
    <ligand>
        <name>NAD(+)</name>
        <dbReference type="ChEBI" id="CHEBI:57540"/>
    </ligand>
</feature>
<feature type="binding site" evidence="1">
    <location>
        <position position="152"/>
    </location>
    <ligand>
        <name>NAD(+)</name>
        <dbReference type="ChEBI" id="CHEBI:57540"/>
    </ligand>
</feature>
<feature type="binding site" evidence="1">
    <location>
        <begin position="170"/>
        <end position="173"/>
    </location>
    <ligand>
        <name>NAD(+)</name>
        <dbReference type="ChEBI" id="CHEBI:57540"/>
    </ligand>
</feature>
<feature type="binding site" evidence="1">
    <location>
        <position position="185"/>
    </location>
    <ligand>
        <name>Zn(2+)</name>
        <dbReference type="ChEBI" id="CHEBI:29105"/>
    </ligand>
</feature>
<feature type="binding site" evidence="1">
    <location>
        <position position="248"/>
    </location>
    <ligand>
        <name>Zn(2+)</name>
        <dbReference type="ChEBI" id="CHEBI:29105"/>
    </ligand>
</feature>
<feature type="binding site" evidence="1">
    <location>
        <position position="265"/>
    </location>
    <ligand>
        <name>Zn(2+)</name>
        <dbReference type="ChEBI" id="CHEBI:29105"/>
    </ligand>
</feature>
<proteinExistence type="inferred from homology"/>
<name>AROB_DESRM</name>
<accession>A4J3A3</accession>
<dbReference type="EC" id="4.2.3.4" evidence="1"/>
<dbReference type="EMBL" id="CP000612">
    <property type="protein sequence ID" value="ABO49556.1"/>
    <property type="molecule type" value="Genomic_DNA"/>
</dbReference>
<dbReference type="RefSeq" id="WP_011877383.1">
    <property type="nucleotide sequence ID" value="NC_009253.1"/>
</dbReference>
<dbReference type="SMR" id="A4J3A3"/>
<dbReference type="STRING" id="349161.Dred_1021"/>
<dbReference type="KEGG" id="drm:Dred_1021"/>
<dbReference type="eggNOG" id="COG0337">
    <property type="taxonomic scope" value="Bacteria"/>
</dbReference>
<dbReference type="HOGENOM" id="CLU_001201_0_2_9"/>
<dbReference type="OrthoDB" id="9806583at2"/>
<dbReference type="UniPathway" id="UPA00053">
    <property type="reaction ID" value="UER00085"/>
</dbReference>
<dbReference type="Proteomes" id="UP000001556">
    <property type="component" value="Chromosome"/>
</dbReference>
<dbReference type="GO" id="GO:0005737">
    <property type="term" value="C:cytoplasm"/>
    <property type="evidence" value="ECO:0007669"/>
    <property type="project" value="UniProtKB-SubCell"/>
</dbReference>
<dbReference type="GO" id="GO:0003856">
    <property type="term" value="F:3-dehydroquinate synthase activity"/>
    <property type="evidence" value="ECO:0007669"/>
    <property type="project" value="UniProtKB-UniRule"/>
</dbReference>
<dbReference type="GO" id="GO:0046872">
    <property type="term" value="F:metal ion binding"/>
    <property type="evidence" value="ECO:0007669"/>
    <property type="project" value="UniProtKB-KW"/>
</dbReference>
<dbReference type="GO" id="GO:0000166">
    <property type="term" value="F:nucleotide binding"/>
    <property type="evidence" value="ECO:0007669"/>
    <property type="project" value="UniProtKB-KW"/>
</dbReference>
<dbReference type="GO" id="GO:0008652">
    <property type="term" value="P:amino acid biosynthetic process"/>
    <property type="evidence" value="ECO:0007669"/>
    <property type="project" value="UniProtKB-KW"/>
</dbReference>
<dbReference type="GO" id="GO:0009073">
    <property type="term" value="P:aromatic amino acid family biosynthetic process"/>
    <property type="evidence" value="ECO:0007669"/>
    <property type="project" value="UniProtKB-KW"/>
</dbReference>
<dbReference type="GO" id="GO:0009423">
    <property type="term" value="P:chorismate biosynthetic process"/>
    <property type="evidence" value="ECO:0007669"/>
    <property type="project" value="UniProtKB-UniRule"/>
</dbReference>
<dbReference type="CDD" id="cd08195">
    <property type="entry name" value="DHQS"/>
    <property type="match status" value="1"/>
</dbReference>
<dbReference type="FunFam" id="3.40.50.1970:FF:000001">
    <property type="entry name" value="3-dehydroquinate synthase"/>
    <property type="match status" value="1"/>
</dbReference>
<dbReference type="Gene3D" id="3.40.50.1970">
    <property type="match status" value="1"/>
</dbReference>
<dbReference type="Gene3D" id="1.20.1090.10">
    <property type="entry name" value="Dehydroquinate synthase-like - alpha domain"/>
    <property type="match status" value="1"/>
</dbReference>
<dbReference type="HAMAP" id="MF_00110">
    <property type="entry name" value="DHQ_synthase"/>
    <property type="match status" value="1"/>
</dbReference>
<dbReference type="InterPro" id="IPR050071">
    <property type="entry name" value="Dehydroquinate_synthase"/>
</dbReference>
<dbReference type="InterPro" id="IPR016037">
    <property type="entry name" value="DHQ_synth_AroB"/>
</dbReference>
<dbReference type="InterPro" id="IPR030963">
    <property type="entry name" value="DHQ_synth_fam"/>
</dbReference>
<dbReference type="InterPro" id="IPR030960">
    <property type="entry name" value="DHQS/DOIS_N"/>
</dbReference>
<dbReference type="InterPro" id="IPR056179">
    <property type="entry name" value="DHQS_C"/>
</dbReference>
<dbReference type="NCBIfam" id="TIGR01357">
    <property type="entry name" value="aroB"/>
    <property type="match status" value="1"/>
</dbReference>
<dbReference type="PANTHER" id="PTHR43622">
    <property type="entry name" value="3-DEHYDROQUINATE SYNTHASE"/>
    <property type="match status" value="1"/>
</dbReference>
<dbReference type="PANTHER" id="PTHR43622:SF7">
    <property type="entry name" value="3-DEHYDROQUINATE SYNTHASE, CHLOROPLASTIC"/>
    <property type="match status" value="1"/>
</dbReference>
<dbReference type="Pfam" id="PF01761">
    <property type="entry name" value="DHQ_synthase"/>
    <property type="match status" value="1"/>
</dbReference>
<dbReference type="Pfam" id="PF24621">
    <property type="entry name" value="DHQS_C"/>
    <property type="match status" value="1"/>
</dbReference>
<dbReference type="PIRSF" id="PIRSF001455">
    <property type="entry name" value="DHQ_synth"/>
    <property type="match status" value="1"/>
</dbReference>
<dbReference type="SUPFAM" id="SSF56796">
    <property type="entry name" value="Dehydroquinate synthase-like"/>
    <property type="match status" value="1"/>
</dbReference>